<sequence length="50" mass="5471">NLYQFSNMIQCTIPGSDPLSDYGNYGCYCGYGGSGTPVDELLRCCQVHDD</sequence>
<dbReference type="EC" id="3.1.1.4" evidence="5"/>
<dbReference type="SMR" id="P84736"/>
<dbReference type="GO" id="GO:0005615">
    <property type="term" value="C:extracellular space"/>
    <property type="evidence" value="ECO:0000314"/>
    <property type="project" value="UniProtKB"/>
</dbReference>
<dbReference type="GO" id="GO:0005509">
    <property type="term" value="F:calcium ion binding"/>
    <property type="evidence" value="ECO:0007669"/>
    <property type="project" value="InterPro"/>
</dbReference>
<dbReference type="GO" id="GO:0047498">
    <property type="term" value="F:calcium-dependent phospholipase A2 activity"/>
    <property type="evidence" value="ECO:0000314"/>
    <property type="project" value="UniProtKB"/>
</dbReference>
<dbReference type="GO" id="GO:0005543">
    <property type="term" value="F:phospholipid binding"/>
    <property type="evidence" value="ECO:0007669"/>
    <property type="project" value="TreeGrafter"/>
</dbReference>
<dbReference type="GO" id="GO:0050482">
    <property type="term" value="P:arachidonate secretion"/>
    <property type="evidence" value="ECO:0007669"/>
    <property type="project" value="InterPro"/>
</dbReference>
<dbReference type="GO" id="GO:0016042">
    <property type="term" value="P:lipid catabolic process"/>
    <property type="evidence" value="ECO:0007669"/>
    <property type="project" value="UniProtKB-KW"/>
</dbReference>
<dbReference type="GO" id="GO:0006644">
    <property type="term" value="P:phospholipid metabolic process"/>
    <property type="evidence" value="ECO:0007669"/>
    <property type="project" value="InterPro"/>
</dbReference>
<dbReference type="Gene3D" id="1.20.90.10">
    <property type="entry name" value="Phospholipase A2 domain"/>
    <property type="match status" value="1"/>
</dbReference>
<dbReference type="InterPro" id="IPR001211">
    <property type="entry name" value="PLipase_A2"/>
</dbReference>
<dbReference type="InterPro" id="IPR016090">
    <property type="entry name" value="PLipase_A2_dom"/>
</dbReference>
<dbReference type="InterPro" id="IPR036444">
    <property type="entry name" value="PLipase_A2_dom_sf"/>
</dbReference>
<dbReference type="PANTHER" id="PTHR11716:SF94">
    <property type="entry name" value="PHOSPHOLIPASE A2"/>
    <property type="match status" value="1"/>
</dbReference>
<dbReference type="PANTHER" id="PTHR11716">
    <property type="entry name" value="PHOSPHOLIPASE A2 FAMILY MEMBER"/>
    <property type="match status" value="1"/>
</dbReference>
<dbReference type="Pfam" id="PF00068">
    <property type="entry name" value="Phospholip_A2_1"/>
    <property type="match status" value="1"/>
</dbReference>
<dbReference type="PRINTS" id="PR00389">
    <property type="entry name" value="PHPHLIPASEA2"/>
</dbReference>
<dbReference type="SMART" id="SM00085">
    <property type="entry name" value="PA2c"/>
    <property type="match status" value="1"/>
</dbReference>
<dbReference type="SUPFAM" id="SSF48619">
    <property type="entry name" value="Phospholipase A2, PLA2"/>
    <property type="match status" value="1"/>
</dbReference>
<feature type="chain" id="PRO_0000161698" description="Phospholipase A2 trimorphin">
    <location>
        <begin position="1"/>
        <end position="50" status="greater than"/>
    </location>
</feature>
<feature type="active site" evidence="2 3 4">
    <location>
        <position position="48"/>
    </location>
</feature>
<feature type="binding site" evidence="1">
    <location>
        <position position="28"/>
    </location>
    <ligand>
        <name>Ca(2+)</name>
        <dbReference type="ChEBI" id="CHEBI:29108"/>
    </ligand>
</feature>
<feature type="binding site" evidence="1">
    <location>
        <position position="30"/>
    </location>
    <ligand>
        <name>Ca(2+)</name>
        <dbReference type="ChEBI" id="CHEBI:29108"/>
    </ligand>
</feature>
<feature type="binding site" evidence="1">
    <location>
        <position position="32"/>
    </location>
    <ligand>
        <name>Ca(2+)</name>
        <dbReference type="ChEBI" id="CHEBI:29108"/>
    </ligand>
</feature>
<feature type="binding site" evidence="2">
    <location>
        <position position="49"/>
    </location>
    <ligand>
        <name>Ca(2+)</name>
        <dbReference type="ChEBI" id="CHEBI:29108"/>
    </ligand>
</feature>
<feature type="disulfide bond" evidence="2">
    <location>
        <begin position="11"/>
        <end status="unknown"/>
    </location>
</feature>
<feature type="disulfide bond" evidence="2">
    <location>
        <begin position="27"/>
        <end status="unknown"/>
    </location>
</feature>
<feature type="disulfide bond" evidence="2">
    <location>
        <begin position="29"/>
        <end position="45"/>
    </location>
</feature>
<feature type="disulfide bond" evidence="2">
    <location>
        <begin position="44"/>
        <end status="unknown"/>
    </location>
</feature>
<feature type="non-terminal residue" evidence="6">
    <location>
        <position position="50"/>
    </location>
</feature>
<keyword id="KW-0106">Calcium</keyword>
<keyword id="KW-0903">Direct protein sequencing</keyword>
<keyword id="KW-1015">Disulfide bond</keyword>
<keyword id="KW-0378">Hydrolase</keyword>
<keyword id="KW-0442">Lipid degradation</keyword>
<keyword id="KW-0443">Lipid metabolism</keyword>
<keyword id="KW-0479">Metal-binding</keyword>
<keyword id="KW-0964">Secreted</keyword>
<accession>P84736</accession>
<protein>
    <recommendedName>
        <fullName>Phospholipase A2 trimorphin</fullName>
        <shortName>svPLA2</shortName>
        <ecNumber evidence="5">3.1.1.4</ecNumber>
    </recommendedName>
    <alternativeName>
        <fullName>Phosphatidylcholine 2-acylhydrolase</fullName>
    </alternativeName>
</protein>
<comment type="function">
    <text evidence="5">PLA2 catalyzes the calcium-dependent hydrolysis of the 2-acyl groups in 3-sn-phosphoglycerides.</text>
</comment>
<comment type="catalytic activity">
    <reaction evidence="3 4 5">
        <text>a 1,2-diacyl-sn-glycero-3-phosphocholine + H2O = a 1-acyl-sn-glycero-3-phosphocholine + a fatty acid + H(+)</text>
        <dbReference type="Rhea" id="RHEA:15801"/>
        <dbReference type="ChEBI" id="CHEBI:15377"/>
        <dbReference type="ChEBI" id="CHEBI:15378"/>
        <dbReference type="ChEBI" id="CHEBI:28868"/>
        <dbReference type="ChEBI" id="CHEBI:57643"/>
        <dbReference type="ChEBI" id="CHEBI:58168"/>
        <dbReference type="EC" id="3.1.1.4"/>
    </reaction>
</comment>
<comment type="cofactor">
    <cofactor evidence="5">
        <name>Ca(2+)</name>
        <dbReference type="ChEBI" id="CHEBI:29108"/>
    </cofactor>
    <text evidence="5">Binds 1 Ca(2+) ion.</text>
</comment>
<comment type="activity regulation">
    <text evidence="5">Inhibited by EDTA.</text>
</comment>
<comment type="biophysicochemical properties">
    <phDependence>
        <text evidence="5">Optimum pH is 7.5. No activity below pH 5.5 or above pH 10.5.</text>
    </phDependence>
</comment>
<comment type="subcellular location">
    <subcellularLocation>
        <location evidence="5">Secreted</location>
    </subcellularLocation>
</comment>
<comment type="tissue specificity">
    <text evidence="5">Expressed by the venom gland.</text>
</comment>
<comment type="mass spectrometry" mass="13996.7" error="10.0" method="MALDI" evidence="5"/>
<comment type="similarity">
    <text evidence="7">Belongs to the phospholipase A2 family. Group I subfamily. D49 sub-subfamily.</text>
</comment>
<organism>
    <name type="scientific">Trimorphodon lambda</name>
    <name type="common">Sonoran lyre snake</name>
    <name type="synonym">Trimorphodon biscutatus lambda</name>
    <dbReference type="NCBI Taxonomy" id="356346"/>
    <lineage>
        <taxon>Eukaryota</taxon>
        <taxon>Metazoa</taxon>
        <taxon>Chordata</taxon>
        <taxon>Craniata</taxon>
        <taxon>Vertebrata</taxon>
        <taxon>Euteleostomi</taxon>
        <taxon>Lepidosauria</taxon>
        <taxon>Squamata</taxon>
        <taxon>Bifurcata</taxon>
        <taxon>Unidentata</taxon>
        <taxon>Episquamata</taxon>
        <taxon>Toxicofera</taxon>
        <taxon>Serpentes</taxon>
        <taxon>Colubroidea</taxon>
        <taxon>Colubridae</taxon>
        <taxon>Colubrinae</taxon>
        <taxon>Trimorphodon</taxon>
    </lineage>
</organism>
<reference evidence="7" key="1">
    <citation type="journal article" date="2004" name="Toxicon">
        <title>Biochemical characterization of phospholipase A2 (trimorphin) from the venom of the sonoran lyre snake Trimorphodon biscutatus lambda (family Colubridae).</title>
        <authorList>
            <person name="Huang P."/>
            <person name="Mackessy S.P."/>
        </authorList>
    </citation>
    <scope>PROTEIN SEQUENCE</scope>
    <scope>FUNCTION</scope>
    <scope>CATALYTIC ACTIVITY</scope>
    <scope>COFACTOR</scope>
    <scope>ACTIVITY REGULATION</scope>
    <scope>BIOPHYSICOCHEMICAL PROPERTIES</scope>
    <scope>SUBCELLULAR LOCATION</scope>
    <scope>TISSUE SPECIFICITY</scope>
    <scope>MASS SPECTROMETRY</scope>
    <source>
        <tissue evidence="5">Venom</tissue>
    </source>
</reference>
<evidence type="ECO:0000250" key="1"/>
<evidence type="ECO:0000250" key="2">
    <source>
        <dbReference type="UniProtKB" id="P00592"/>
    </source>
</evidence>
<evidence type="ECO:0000255" key="3">
    <source>
        <dbReference type="PROSITE-ProRule" id="PRU10035"/>
    </source>
</evidence>
<evidence type="ECO:0000255" key="4">
    <source>
        <dbReference type="PROSITE-ProRule" id="PRU10036"/>
    </source>
</evidence>
<evidence type="ECO:0000269" key="5">
    <source>
    </source>
</evidence>
<evidence type="ECO:0000303" key="6">
    <source>
    </source>
</evidence>
<evidence type="ECO:0000305" key="7"/>
<name>PA2_TRILM</name>
<proteinExistence type="evidence at protein level"/>